<gene>
    <name type="primary">act-3</name>
    <name type="ORF">T04C12.4</name>
</gene>
<name>ACT3_CAEEL</name>
<organism>
    <name type="scientific">Caenorhabditis elegans</name>
    <dbReference type="NCBI Taxonomy" id="6239"/>
    <lineage>
        <taxon>Eukaryota</taxon>
        <taxon>Metazoa</taxon>
        <taxon>Ecdysozoa</taxon>
        <taxon>Nematoda</taxon>
        <taxon>Chromadorea</taxon>
        <taxon>Rhabditida</taxon>
        <taxon>Rhabditina</taxon>
        <taxon>Rhabditomorpha</taxon>
        <taxon>Rhabditoidea</taxon>
        <taxon>Rhabditidae</taxon>
        <taxon>Peloderinae</taxon>
        <taxon>Caenorhabditis</taxon>
    </lineage>
</organism>
<accession>P0DM42</accession>
<accession>P10983</accession>
<accession>P10985</accession>
<dbReference type="EC" id="3.6.4.-" evidence="2"/>
<dbReference type="EMBL" id="X16798">
    <property type="protein sequence ID" value="CAA34719.1"/>
    <property type="molecule type" value="Genomic_DNA"/>
</dbReference>
<dbReference type="EMBL" id="Z81584">
    <property type="protein sequence ID" value="CAB04676.1"/>
    <property type="molecule type" value="Genomic_DNA"/>
</dbReference>
<dbReference type="EMBL" id="J01044">
    <property type="protein sequence ID" value="AAA27889.1"/>
    <property type="molecule type" value="Genomic_DNA"/>
</dbReference>
<dbReference type="PIR" id="S16710">
    <property type="entry name" value="S16710"/>
</dbReference>
<dbReference type="RefSeq" id="NP_001366892.1">
    <property type="nucleotide sequence ID" value="NM_001380754.2"/>
</dbReference>
<dbReference type="RefSeq" id="NP_505817.1">
    <property type="nucleotide sequence ID" value="NM_073416.6"/>
</dbReference>
<dbReference type="SMR" id="P0DM42"/>
<dbReference type="BioGRID" id="44560">
    <property type="interactions" value="3"/>
</dbReference>
<dbReference type="BioGRID" id="44562">
    <property type="interactions" value="13"/>
</dbReference>
<dbReference type="FunCoup" id="P0DM42">
    <property type="interactions" value="2119"/>
</dbReference>
<dbReference type="EnsemblMetazoa" id="T04C12.4.1">
    <property type="protein sequence ID" value="T04C12.4.1"/>
    <property type="gene ID" value="WBGene00000065"/>
</dbReference>
<dbReference type="EnsemblMetazoa" id="T04C12.4.2">
    <property type="protein sequence ID" value="T04C12.4.2"/>
    <property type="gene ID" value="WBGene00000065"/>
</dbReference>
<dbReference type="EnsemblMetazoa" id="T04C12.4.3">
    <property type="protein sequence ID" value="T04C12.4.3"/>
    <property type="gene ID" value="WBGene00000065"/>
</dbReference>
<dbReference type="GeneID" id="179533"/>
<dbReference type="KEGG" id="cel:CELE_T04C12.6"/>
<dbReference type="AGR" id="WB:WBGene00000065"/>
<dbReference type="CTD" id="179535"/>
<dbReference type="WormBase" id="T04C12.4">
    <property type="protein sequence ID" value="CE13148"/>
    <property type="gene ID" value="WBGene00000065"/>
    <property type="gene designation" value="act-3"/>
</dbReference>
<dbReference type="GeneTree" id="ENSGT00950000182960"/>
<dbReference type="HOGENOM" id="CLU_027965_0_2_1"/>
<dbReference type="InParanoid" id="P0DM42"/>
<dbReference type="OrthoDB" id="9973372at2759"/>
<dbReference type="PhylomeDB" id="P0DM42"/>
<dbReference type="Reactome" id="R-CEL-114608">
    <property type="pathway name" value="Platelet degranulation"/>
</dbReference>
<dbReference type="Reactome" id="R-CEL-190873">
    <property type="pathway name" value="Gap junction degradation"/>
</dbReference>
<dbReference type="Reactome" id="R-CEL-196025">
    <property type="pathway name" value="Formation of annular gap junctions"/>
</dbReference>
<dbReference type="Reactome" id="R-CEL-2029482">
    <property type="pathway name" value="Regulation of actin dynamics for phagocytic cup formation"/>
</dbReference>
<dbReference type="Reactome" id="R-CEL-3928662">
    <property type="pathway name" value="EPHB-mediated forward signaling"/>
</dbReference>
<dbReference type="Reactome" id="R-CEL-3928665">
    <property type="pathway name" value="EPH-ephrin mediated repulsion of cells"/>
</dbReference>
<dbReference type="Reactome" id="R-CEL-437239">
    <property type="pathway name" value="Recycling pathway of L1"/>
</dbReference>
<dbReference type="Reactome" id="R-CEL-4420097">
    <property type="pathway name" value="VEGFA-VEGFR2 Pathway"/>
</dbReference>
<dbReference type="Reactome" id="R-CEL-446353">
    <property type="pathway name" value="Cell-extracellular matrix interactions"/>
</dbReference>
<dbReference type="Reactome" id="R-CEL-5626467">
    <property type="pathway name" value="RHO GTPases activate IQGAPs"/>
</dbReference>
<dbReference type="Reactome" id="R-CEL-5663213">
    <property type="pathway name" value="RHO GTPases Activate WASPs and WAVEs"/>
</dbReference>
<dbReference type="Reactome" id="R-CEL-5663220">
    <property type="pathway name" value="RHO GTPases Activate Formins"/>
</dbReference>
<dbReference type="Reactome" id="R-CEL-5674135">
    <property type="pathway name" value="MAP2K and MAPK activation"/>
</dbReference>
<dbReference type="Reactome" id="R-CEL-8856828">
    <property type="pathway name" value="Clathrin-mediated endocytosis"/>
</dbReference>
<dbReference type="Reactome" id="R-CEL-9035034">
    <property type="pathway name" value="RHOF GTPase cycle"/>
</dbReference>
<dbReference type="Reactome" id="R-CEL-9913351">
    <property type="pathway name" value="Formation of the dystrophin-glycoprotein complex (DGC)"/>
</dbReference>
<dbReference type="SignaLink" id="P0DM42"/>
<dbReference type="PRO" id="PR:P0DM42"/>
<dbReference type="Proteomes" id="UP000001940">
    <property type="component" value="Chromosome V"/>
</dbReference>
<dbReference type="Bgee" id="WBGene00000065">
    <property type="expression patterns" value="Expressed in germ line (C elegans) and 4 other cell types or tissues"/>
</dbReference>
<dbReference type="GO" id="GO:0015629">
    <property type="term" value="C:actin cytoskeleton"/>
    <property type="evidence" value="ECO:0000318"/>
    <property type="project" value="GO_Central"/>
</dbReference>
<dbReference type="GO" id="GO:0005865">
    <property type="term" value="C:striated muscle thin filament"/>
    <property type="evidence" value="ECO:0000314"/>
    <property type="project" value="WormBase"/>
</dbReference>
<dbReference type="GO" id="GO:0005524">
    <property type="term" value="F:ATP binding"/>
    <property type="evidence" value="ECO:0007669"/>
    <property type="project" value="UniProtKB-KW"/>
</dbReference>
<dbReference type="GO" id="GO:0016787">
    <property type="term" value="F:hydrolase activity"/>
    <property type="evidence" value="ECO:0007669"/>
    <property type="project" value="UniProtKB-KW"/>
</dbReference>
<dbReference type="GO" id="GO:0030866">
    <property type="term" value="P:cortical actin cytoskeleton organization"/>
    <property type="evidence" value="ECO:0000316"/>
    <property type="project" value="WormBase"/>
</dbReference>
<dbReference type="GO" id="GO:0009792">
    <property type="term" value="P:embryo development ending in birth or egg hatching"/>
    <property type="evidence" value="ECO:0000316"/>
    <property type="project" value="WormBase"/>
</dbReference>
<dbReference type="GO" id="GO:0000281">
    <property type="term" value="P:mitotic cytokinesis"/>
    <property type="evidence" value="ECO:0000316"/>
    <property type="project" value="WormBase"/>
</dbReference>
<dbReference type="CDD" id="cd10224">
    <property type="entry name" value="ASKHA_NBD_actin"/>
    <property type="match status" value="1"/>
</dbReference>
<dbReference type="FunFam" id="3.30.420.40:FF:000131">
    <property type="entry name" value="Actin, alpha skeletal muscle"/>
    <property type="match status" value="1"/>
</dbReference>
<dbReference type="FunFam" id="3.30.420.40:FF:000291">
    <property type="entry name" value="Actin, alpha skeletal muscle"/>
    <property type="match status" value="1"/>
</dbReference>
<dbReference type="FunFam" id="3.90.640.10:FF:000047">
    <property type="entry name" value="Actin, alpha skeletal muscle"/>
    <property type="match status" value="1"/>
</dbReference>
<dbReference type="FunFam" id="3.30.420.40:FF:000058">
    <property type="entry name" value="Putative actin-related protein 5"/>
    <property type="match status" value="1"/>
</dbReference>
<dbReference type="Gene3D" id="3.30.420.40">
    <property type="match status" value="2"/>
</dbReference>
<dbReference type="Gene3D" id="3.90.640.10">
    <property type="entry name" value="Actin, Chain A, domain 4"/>
    <property type="match status" value="1"/>
</dbReference>
<dbReference type="InterPro" id="IPR004000">
    <property type="entry name" value="Actin"/>
</dbReference>
<dbReference type="InterPro" id="IPR020902">
    <property type="entry name" value="Actin/actin-like_CS"/>
</dbReference>
<dbReference type="InterPro" id="IPR004001">
    <property type="entry name" value="Actin_CS"/>
</dbReference>
<dbReference type="InterPro" id="IPR043129">
    <property type="entry name" value="ATPase_NBD"/>
</dbReference>
<dbReference type="PANTHER" id="PTHR11937">
    <property type="entry name" value="ACTIN"/>
    <property type="match status" value="1"/>
</dbReference>
<dbReference type="Pfam" id="PF00022">
    <property type="entry name" value="Actin"/>
    <property type="match status" value="1"/>
</dbReference>
<dbReference type="PRINTS" id="PR00190">
    <property type="entry name" value="ACTIN"/>
</dbReference>
<dbReference type="SMART" id="SM00268">
    <property type="entry name" value="ACTIN"/>
    <property type="match status" value="1"/>
</dbReference>
<dbReference type="SUPFAM" id="SSF53067">
    <property type="entry name" value="Actin-like ATPase domain"/>
    <property type="match status" value="2"/>
</dbReference>
<dbReference type="PROSITE" id="PS00406">
    <property type="entry name" value="ACTINS_1"/>
    <property type="match status" value="1"/>
</dbReference>
<dbReference type="PROSITE" id="PS00432">
    <property type="entry name" value="ACTINS_2"/>
    <property type="match status" value="1"/>
</dbReference>
<dbReference type="PROSITE" id="PS01132">
    <property type="entry name" value="ACTINS_ACT_LIKE"/>
    <property type="match status" value="1"/>
</dbReference>
<comment type="function">
    <text>Actins are highly conserved proteins that are involved in various types of cell motility and are ubiquitously expressed in all eukaryotic cells.</text>
</comment>
<comment type="catalytic activity">
    <reaction evidence="2">
        <text>ATP + H2O = ADP + phosphate + H(+)</text>
        <dbReference type="Rhea" id="RHEA:13065"/>
        <dbReference type="ChEBI" id="CHEBI:15377"/>
        <dbReference type="ChEBI" id="CHEBI:15378"/>
        <dbReference type="ChEBI" id="CHEBI:30616"/>
        <dbReference type="ChEBI" id="CHEBI:43474"/>
        <dbReference type="ChEBI" id="CHEBI:456216"/>
    </reaction>
</comment>
<comment type="subcellular location">
    <subcellularLocation>
        <location>Cytoplasm</location>
        <location>Cytoskeleton</location>
    </subcellularLocation>
</comment>
<comment type="miscellaneous">
    <text>In this organism there are four genes coding for actin. The sequences coded by genes 1 and 3 are identical. There are a few variations in the actins coded by genes 2 and 4.</text>
</comment>
<comment type="similarity">
    <text evidence="3">Belongs to the actin family.</text>
</comment>
<keyword id="KW-0007">Acetylation</keyword>
<keyword id="KW-0067">ATP-binding</keyword>
<keyword id="KW-0963">Cytoplasm</keyword>
<keyword id="KW-0206">Cytoskeleton</keyword>
<keyword id="KW-0378">Hydrolase</keyword>
<keyword id="KW-0547">Nucleotide-binding</keyword>
<keyword id="KW-1185">Reference proteome</keyword>
<evidence type="ECO:0000250" key="1"/>
<evidence type="ECO:0000250" key="2">
    <source>
        <dbReference type="UniProtKB" id="P68137"/>
    </source>
</evidence>
<evidence type="ECO:0000305" key="3"/>
<reference key="1">
    <citation type="journal article" date="1989" name="J. Mol. Biol.">
        <title>Wild-type and mutant actin genes in Caenorhabditis elegans.</title>
        <authorList>
            <person name="Krause M."/>
            <person name="Wild M."/>
            <person name="Rosenzweig B."/>
            <person name="Hirsh D."/>
        </authorList>
    </citation>
    <scope>NUCLEOTIDE SEQUENCE [GENOMIC DNA]</scope>
</reference>
<reference key="2">
    <citation type="journal article" date="1998" name="Science">
        <title>Genome sequence of the nematode C. elegans: a platform for investigating biology.</title>
        <authorList>
            <consortium name="The C. elegans sequencing consortium"/>
        </authorList>
    </citation>
    <scope>NUCLEOTIDE SEQUENCE [LARGE SCALE GENOMIC DNA]</scope>
    <source>
        <strain>Bristol N2</strain>
    </source>
</reference>
<reference key="3">
    <citation type="journal article" date="1983" name="J. Mol. Biol.">
        <title>Actin gene family of Caenorhabditis elegans.</title>
        <authorList>
            <person name="Files J.G."/>
            <person name="Carr S."/>
            <person name="Hirsh D."/>
        </authorList>
    </citation>
    <scope>NUCLEOTIDE SEQUENCE [GENOMIC DNA] OF 1-86</scope>
</reference>
<sequence length="376" mass="41796">MCDDEVAALVVDNGSGMCKAGFAGDDAPRAVFPSIVGRPRHQGVMVGMGQKDSYVGDEAQSKRGILTLKYPIEHGIVTNWDDMEKIWHHTFYNELRVAPEEHPVLLTEAPLNPKANREKMTQIMFETFNTPAMYVAIQAVLSLYASGRTTGVVLDSGDGVTHTVPIYEGYALPHAILRLDLAGRDLTDYLMKILTERGYSFTTTAEREIVRDIKEKLCYVALDFEQEMATAASSSSLEKSYELPDGQVITVGNERFRCPEAMFQPSFLGMESAGIHETSYNSIMKCDIDIRKDLYANTVLSGGTTMYPGIADRMQKEITALAPSTMKIKIIAPPERKYSVWIGGSILASLSTFQQMWISKQEYDESGPSIVHRKCF</sequence>
<protein>
    <recommendedName>
        <fullName>Actin-3</fullName>
        <ecNumber evidence="2">3.6.4.-</ecNumber>
    </recommendedName>
</protein>
<feature type="propeptide" id="PRO_0000422648" description="Removed in mature form" evidence="1">
    <location>
        <begin position="1"/>
        <end position="2"/>
    </location>
</feature>
<feature type="chain" id="PRO_0000422649" description="Actin-3">
    <location>
        <begin position="3"/>
        <end position="376"/>
    </location>
</feature>
<feature type="modified residue" description="N-acetylaspartate" evidence="1">
    <location>
        <position position="3"/>
    </location>
</feature>
<proteinExistence type="inferred from homology"/>